<dbReference type="EC" id="2.4.1.21" evidence="1"/>
<dbReference type="EMBL" id="CP000777">
    <property type="protein sequence ID" value="ABZ95362.1"/>
    <property type="molecule type" value="Genomic_DNA"/>
</dbReference>
<dbReference type="RefSeq" id="WP_012389915.1">
    <property type="nucleotide sequence ID" value="NC_010842.1"/>
</dbReference>
<dbReference type="SMR" id="B0SFJ4"/>
<dbReference type="CAZy" id="GT5">
    <property type="family name" value="Glycosyltransferase Family 5"/>
</dbReference>
<dbReference type="KEGG" id="lbf:LBF_2887"/>
<dbReference type="HOGENOM" id="CLU_009583_18_2_12"/>
<dbReference type="UniPathway" id="UPA00164"/>
<dbReference type="GO" id="GO:0009011">
    <property type="term" value="F:alpha-1,4-glucan glucosyltransferase (ADP-glucose donor) activity"/>
    <property type="evidence" value="ECO:0007669"/>
    <property type="project" value="UniProtKB-UniRule"/>
</dbReference>
<dbReference type="GO" id="GO:0004373">
    <property type="term" value="F:alpha-1,4-glucan glucosyltransferase (UDP-glucose donor) activity"/>
    <property type="evidence" value="ECO:0007669"/>
    <property type="project" value="InterPro"/>
</dbReference>
<dbReference type="GO" id="GO:0005978">
    <property type="term" value="P:glycogen biosynthetic process"/>
    <property type="evidence" value="ECO:0007669"/>
    <property type="project" value="UniProtKB-UniRule"/>
</dbReference>
<dbReference type="CDD" id="cd03791">
    <property type="entry name" value="GT5_Glycogen_synthase_DULL1-like"/>
    <property type="match status" value="1"/>
</dbReference>
<dbReference type="Gene3D" id="3.40.50.2000">
    <property type="entry name" value="Glycogen Phosphorylase B"/>
    <property type="match status" value="2"/>
</dbReference>
<dbReference type="HAMAP" id="MF_00484">
    <property type="entry name" value="Glycogen_synth"/>
    <property type="match status" value="1"/>
</dbReference>
<dbReference type="InterPro" id="IPR001296">
    <property type="entry name" value="Glyco_trans_1"/>
</dbReference>
<dbReference type="InterPro" id="IPR011835">
    <property type="entry name" value="GS/SS"/>
</dbReference>
<dbReference type="InterPro" id="IPR013534">
    <property type="entry name" value="Starch_synth_cat_dom"/>
</dbReference>
<dbReference type="NCBIfam" id="TIGR02095">
    <property type="entry name" value="glgA"/>
    <property type="match status" value="1"/>
</dbReference>
<dbReference type="PANTHER" id="PTHR45825:SF11">
    <property type="entry name" value="ALPHA AMYLASE DOMAIN-CONTAINING PROTEIN"/>
    <property type="match status" value="1"/>
</dbReference>
<dbReference type="PANTHER" id="PTHR45825">
    <property type="entry name" value="GRANULE-BOUND STARCH SYNTHASE 1, CHLOROPLASTIC/AMYLOPLASTIC"/>
    <property type="match status" value="1"/>
</dbReference>
<dbReference type="Pfam" id="PF08323">
    <property type="entry name" value="Glyco_transf_5"/>
    <property type="match status" value="1"/>
</dbReference>
<dbReference type="Pfam" id="PF00534">
    <property type="entry name" value="Glycos_transf_1"/>
    <property type="match status" value="1"/>
</dbReference>
<dbReference type="SUPFAM" id="SSF53756">
    <property type="entry name" value="UDP-Glycosyltransferase/glycogen phosphorylase"/>
    <property type="match status" value="1"/>
</dbReference>
<protein>
    <recommendedName>
        <fullName evidence="1">Glycogen synthase</fullName>
        <ecNumber evidence="1">2.4.1.21</ecNumber>
    </recommendedName>
    <alternativeName>
        <fullName evidence="1">Starch [bacterial glycogen] synthase</fullName>
    </alternativeName>
</protein>
<proteinExistence type="inferred from homology"/>
<gene>
    <name evidence="1" type="primary">glgA</name>
    <name type="ordered locus">LBF_2887</name>
</gene>
<name>GLGA_LEPBA</name>
<accession>B0SFJ4</accession>
<evidence type="ECO:0000255" key="1">
    <source>
        <dbReference type="HAMAP-Rule" id="MF_00484"/>
    </source>
</evidence>
<keyword id="KW-0320">Glycogen biosynthesis</keyword>
<keyword id="KW-0328">Glycosyltransferase</keyword>
<keyword id="KW-0808">Transferase</keyword>
<reference key="1">
    <citation type="journal article" date="2008" name="PLoS ONE">
        <title>Genome sequence of the saprophyte Leptospira biflexa provides insights into the evolution of Leptospira and the pathogenesis of leptospirosis.</title>
        <authorList>
            <person name="Picardeau M."/>
            <person name="Bulach D.M."/>
            <person name="Bouchier C."/>
            <person name="Zuerner R.L."/>
            <person name="Zidane N."/>
            <person name="Wilson P.J."/>
            <person name="Creno S."/>
            <person name="Kuczek E.S."/>
            <person name="Bommezzadri S."/>
            <person name="Davis J.C."/>
            <person name="McGrath A."/>
            <person name="Johnson M.J."/>
            <person name="Boursaux-Eude C."/>
            <person name="Seemann T."/>
            <person name="Rouy Z."/>
            <person name="Coppel R.L."/>
            <person name="Rood J.I."/>
            <person name="Lajus A."/>
            <person name="Davies J.K."/>
            <person name="Medigue C."/>
            <person name="Adler B."/>
        </authorList>
    </citation>
    <scope>NUCLEOTIDE SEQUENCE [LARGE SCALE GENOMIC DNA]</scope>
    <source>
        <strain>Patoc 1 / Ames</strain>
    </source>
</reference>
<feature type="chain" id="PRO_1000126083" description="Glycogen synthase">
    <location>
        <begin position="1"/>
        <end position="476"/>
    </location>
</feature>
<feature type="binding site" evidence="1">
    <location>
        <position position="15"/>
    </location>
    <ligand>
        <name>ADP-alpha-D-glucose</name>
        <dbReference type="ChEBI" id="CHEBI:57498"/>
    </ligand>
</feature>
<comment type="function">
    <text evidence="1">Synthesizes alpha-1,4-glucan chains using ADP-glucose.</text>
</comment>
<comment type="catalytic activity">
    <reaction evidence="1">
        <text>[(1-&gt;4)-alpha-D-glucosyl](n) + ADP-alpha-D-glucose = [(1-&gt;4)-alpha-D-glucosyl](n+1) + ADP + H(+)</text>
        <dbReference type="Rhea" id="RHEA:18189"/>
        <dbReference type="Rhea" id="RHEA-COMP:9584"/>
        <dbReference type="Rhea" id="RHEA-COMP:9587"/>
        <dbReference type="ChEBI" id="CHEBI:15378"/>
        <dbReference type="ChEBI" id="CHEBI:15444"/>
        <dbReference type="ChEBI" id="CHEBI:57498"/>
        <dbReference type="ChEBI" id="CHEBI:456216"/>
        <dbReference type="EC" id="2.4.1.21"/>
    </reaction>
</comment>
<comment type="pathway">
    <text evidence="1">Glycan biosynthesis; glycogen biosynthesis.</text>
</comment>
<comment type="similarity">
    <text evidence="1">Belongs to the glycosyltransferase 1 family. Bacterial/plant glycogen synthase subfamily.</text>
</comment>
<sequence>MKILHASAEYFPYTKMGGLADMLASLTKEQSRTEEVYVALPLIGKLGKEPNWTGKEVGALLPQDAKEETIAVSLLAKARFREAIESGVKLYFFDSELFSGLNSIYGQADEHYRFAIFSYACYALSQILQVDVFHAHDWHTALSLTLQKNSTKPIPSLFTIHNLAYQGDHPFWMTGFLKEDPFYLITSPFDQDGKCNYMKAGILSAGQITTVSPGYREETLREPNGFGLSYVLKKRKADYTGILNGIDPDEWNPKVDKRIFQTYHLQNWKEGKRKNKEHLYREIGRPNVSLDLPLIGLIGRLTYQKGFPTFLQAFLERRHLPHRYVVLGSGDPETENAFFHLSDMMPDVFYFYKGYNESLAHQIEAASDFFLMPSLFEPCGLNQMYSHVYGTIPIVSRVGGLRDTVDESIDIQFKTGIVFEPNDKSSLGYALERANDLFVSPERDHVVKNMMNLDWTWTKRKLEYDRVYKIAIELLE</sequence>
<organism>
    <name type="scientific">Leptospira biflexa serovar Patoc (strain Patoc 1 / Ames)</name>
    <dbReference type="NCBI Taxonomy" id="355278"/>
    <lineage>
        <taxon>Bacteria</taxon>
        <taxon>Pseudomonadati</taxon>
        <taxon>Spirochaetota</taxon>
        <taxon>Spirochaetia</taxon>
        <taxon>Leptospirales</taxon>
        <taxon>Leptospiraceae</taxon>
        <taxon>Leptospira</taxon>
    </lineage>
</organism>